<proteinExistence type="inferred from homology"/>
<gene>
    <name evidence="1" type="primary">rplN</name>
    <name type="ordered locus">SO_0241</name>
</gene>
<dbReference type="EMBL" id="AE014299">
    <property type="protein sequence ID" value="AAN53326.1"/>
    <property type="molecule type" value="Genomic_DNA"/>
</dbReference>
<dbReference type="RefSeq" id="NP_715881.1">
    <property type="nucleotide sequence ID" value="NC_004347.2"/>
</dbReference>
<dbReference type="RefSeq" id="WP_006083590.1">
    <property type="nucleotide sequence ID" value="NZ_CP053946.1"/>
</dbReference>
<dbReference type="SMR" id="Q8EK59"/>
<dbReference type="STRING" id="211586.SO_0241"/>
<dbReference type="PaxDb" id="211586-SO_0241"/>
<dbReference type="GeneID" id="75190608"/>
<dbReference type="KEGG" id="son:SO_0241"/>
<dbReference type="PATRIC" id="fig|211586.12.peg.229"/>
<dbReference type="eggNOG" id="COG0093">
    <property type="taxonomic scope" value="Bacteria"/>
</dbReference>
<dbReference type="HOGENOM" id="CLU_095071_2_1_6"/>
<dbReference type="OrthoDB" id="9806379at2"/>
<dbReference type="PhylomeDB" id="Q8EK59"/>
<dbReference type="BioCyc" id="SONE211586:G1GMP-230-MONOMER"/>
<dbReference type="PRO" id="PR:Q8EK59"/>
<dbReference type="Proteomes" id="UP000008186">
    <property type="component" value="Chromosome"/>
</dbReference>
<dbReference type="GO" id="GO:0022625">
    <property type="term" value="C:cytosolic large ribosomal subunit"/>
    <property type="evidence" value="ECO:0000318"/>
    <property type="project" value="GO_Central"/>
</dbReference>
<dbReference type="GO" id="GO:0070180">
    <property type="term" value="F:large ribosomal subunit rRNA binding"/>
    <property type="evidence" value="ECO:0000318"/>
    <property type="project" value="GO_Central"/>
</dbReference>
<dbReference type="GO" id="GO:0003735">
    <property type="term" value="F:structural constituent of ribosome"/>
    <property type="evidence" value="ECO:0000318"/>
    <property type="project" value="GO_Central"/>
</dbReference>
<dbReference type="GO" id="GO:0006412">
    <property type="term" value="P:translation"/>
    <property type="evidence" value="ECO:0007669"/>
    <property type="project" value="UniProtKB-UniRule"/>
</dbReference>
<dbReference type="CDD" id="cd00337">
    <property type="entry name" value="Ribosomal_uL14"/>
    <property type="match status" value="1"/>
</dbReference>
<dbReference type="FunFam" id="2.40.150.20:FF:000001">
    <property type="entry name" value="50S ribosomal protein L14"/>
    <property type="match status" value="1"/>
</dbReference>
<dbReference type="Gene3D" id="2.40.150.20">
    <property type="entry name" value="Ribosomal protein L14"/>
    <property type="match status" value="1"/>
</dbReference>
<dbReference type="HAMAP" id="MF_01367">
    <property type="entry name" value="Ribosomal_uL14"/>
    <property type="match status" value="1"/>
</dbReference>
<dbReference type="InterPro" id="IPR000218">
    <property type="entry name" value="Ribosomal_uL14"/>
</dbReference>
<dbReference type="InterPro" id="IPR005745">
    <property type="entry name" value="Ribosomal_uL14_bac-type"/>
</dbReference>
<dbReference type="InterPro" id="IPR019972">
    <property type="entry name" value="Ribosomal_uL14_CS"/>
</dbReference>
<dbReference type="InterPro" id="IPR036853">
    <property type="entry name" value="Ribosomal_uL14_sf"/>
</dbReference>
<dbReference type="NCBIfam" id="TIGR01067">
    <property type="entry name" value="rplN_bact"/>
    <property type="match status" value="1"/>
</dbReference>
<dbReference type="PANTHER" id="PTHR11761">
    <property type="entry name" value="50S/60S RIBOSOMAL PROTEIN L14/L23"/>
    <property type="match status" value="1"/>
</dbReference>
<dbReference type="PANTHER" id="PTHR11761:SF3">
    <property type="entry name" value="LARGE RIBOSOMAL SUBUNIT PROTEIN UL14M"/>
    <property type="match status" value="1"/>
</dbReference>
<dbReference type="Pfam" id="PF00238">
    <property type="entry name" value="Ribosomal_L14"/>
    <property type="match status" value="1"/>
</dbReference>
<dbReference type="SMART" id="SM01374">
    <property type="entry name" value="Ribosomal_L14"/>
    <property type="match status" value="1"/>
</dbReference>
<dbReference type="SUPFAM" id="SSF50193">
    <property type="entry name" value="Ribosomal protein L14"/>
    <property type="match status" value="1"/>
</dbReference>
<dbReference type="PROSITE" id="PS00049">
    <property type="entry name" value="RIBOSOMAL_L14"/>
    <property type="match status" value="1"/>
</dbReference>
<evidence type="ECO:0000255" key="1">
    <source>
        <dbReference type="HAMAP-Rule" id="MF_01367"/>
    </source>
</evidence>
<evidence type="ECO:0000305" key="2"/>
<keyword id="KW-1185">Reference proteome</keyword>
<keyword id="KW-0687">Ribonucleoprotein</keyword>
<keyword id="KW-0689">Ribosomal protein</keyword>
<keyword id="KW-0694">RNA-binding</keyword>
<keyword id="KW-0699">rRNA-binding</keyword>
<name>RL14_SHEON</name>
<feature type="chain" id="PRO_0000266557" description="Large ribosomal subunit protein uL14">
    <location>
        <begin position="1"/>
        <end position="122"/>
    </location>
</feature>
<sequence>MIQMQSTLDVACNSGARRVQCIKVLGGSHRRYAGIGDIIKVSVKEAIPRAKAKKGDVYNAVVVRTKKGVRRPDGSVIRFDRNAAVLLNNNLQPIGTRIFGPVTRELRNEQFMKIVSLAPEVL</sequence>
<organism>
    <name type="scientific">Shewanella oneidensis (strain ATCC 700550 / JCM 31522 / CIP 106686 / LMG 19005 / NCIMB 14063 / MR-1)</name>
    <dbReference type="NCBI Taxonomy" id="211586"/>
    <lineage>
        <taxon>Bacteria</taxon>
        <taxon>Pseudomonadati</taxon>
        <taxon>Pseudomonadota</taxon>
        <taxon>Gammaproteobacteria</taxon>
        <taxon>Alteromonadales</taxon>
        <taxon>Shewanellaceae</taxon>
        <taxon>Shewanella</taxon>
    </lineage>
</organism>
<protein>
    <recommendedName>
        <fullName evidence="1">Large ribosomal subunit protein uL14</fullName>
    </recommendedName>
    <alternativeName>
        <fullName evidence="2">50S ribosomal protein L14</fullName>
    </alternativeName>
</protein>
<reference key="1">
    <citation type="journal article" date="2002" name="Nat. Biotechnol.">
        <title>Genome sequence of the dissimilatory metal ion-reducing bacterium Shewanella oneidensis.</title>
        <authorList>
            <person name="Heidelberg J.F."/>
            <person name="Paulsen I.T."/>
            <person name="Nelson K.E."/>
            <person name="Gaidos E.J."/>
            <person name="Nelson W.C."/>
            <person name="Read T.D."/>
            <person name="Eisen J.A."/>
            <person name="Seshadri R."/>
            <person name="Ward N.L."/>
            <person name="Methe B.A."/>
            <person name="Clayton R.A."/>
            <person name="Meyer T."/>
            <person name="Tsapin A."/>
            <person name="Scott J."/>
            <person name="Beanan M.J."/>
            <person name="Brinkac L.M."/>
            <person name="Daugherty S.C."/>
            <person name="DeBoy R.T."/>
            <person name="Dodson R.J."/>
            <person name="Durkin A.S."/>
            <person name="Haft D.H."/>
            <person name="Kolonay J.F."/>
            <person name="Madupu R."/>
            <person name="Peterson J.D."/>
            <person name="Umayam L.A."/>
            <person name="White O."/>
            <person name="Wolf A.M."/>
            <person name="Vamathevan J.J."/>
            <person name="Weidman J.F."/>
            <person name="Impraim M."/>
            <person name="Lee K."/>
            <person name="Berry K.J."/>
            <person name="Lee C."/>
            <person name="Mueller J."/>
            <person name="Khouri H.M."/>
            <person name="Gill J."/>
            <person name="Utterback T.R."/>
            <person name="McDonald L.A."/>
            <person name="Feldblyum T.V."/>
            <person name="Smith H.O."/>
            <person name="Venter J.C."/>
            <person name="Nealson K.H."/>
            <person name="Fraser C.M."/>
        </authorList>
    </citation>
    <scope>NUCLEOTIDE SEQUENCE [LARGE SCALE GENOMIC DNA]</scope>
    <source>
        <strain>ATCC 700550 / JCM 31522 / CIP 106686 / LMG 19005 / NCIMB 14063 / MR-1</strain>
    </source>
</reference>
<accession>Q8EK59</accession>
<comment type="function">
    <text evidence="1">Binds to 23S rRNA. Forms part of two intersubunit bridges in the 70S ribosome.</text>
</comment>
<comment type="subunit">
    <text evidence="1">Part of the 50S ribosomal subunit. Forms a cluster with proteins L3 and L19. In the 70S ribosome, L14 and L19 interact and together make contacts with the 16S rRNA in bridges B5 and B8.</text>
</comment>
<comment type="similarity">
    <text evidence="1">Belongs to the universal ribosomal protein uL14 family.</text>
</comment>